<evidence type="ECO:0000255" key="1">
    <source>
        <dbReference type="HAMAP-Rule" id="MF_00382"/>
    </source>
</evidence>
<evidence type="ECO:0000305" key="2"/>
<protein>
    <recommendedName>
        <fullName evidence="1">Large ribosomal subunit protein bL20</fullName>
    </recommendedName>
    <alternativeName>
        <fullName evidence="2">50S ribosomal protein L20</fullName>
    </alternativeName>
</protein>
<dbReference type="EMBL" id="FM178379">
    <property type="protein sequence ID" value="CAQ79442.1"/>
    <property type="molecule type" value="Genomic_DNA"/>
</dbReference>
<dbReference type="RefSeq" id="WP_012550351.1">
    <property type="nucleotide sequence ID" value="NC_011312.1"/>
</dbReference>
<dbReference type="SMR" id="B6EN31"/>
<dbReference type="KEGG" id="vsa:VSAL_I1757"/>
<dbReference type="eggNOG" id="COG0292">
    <property type="taxonomic scope" value="Bacteria"/>
</dbReference>
<dbReference type="HOGENOM" id="CLU_123265_0_1_6"/>
<dbReference type="Proteomes" id="UP000001730">
    <property type="component" value="Chromosome 1"/>
</dbReference>
<dbReference type="GO" id="GO:1990904">
    <property type="term" value="C:ribonucleoprotein complex"/>
    <property type="evidence" value="ECO:0007669"/>
    <property type="project" value="UniProtKB-KW"/>
</dbReference>
<dbReference type="GO" id="GO:0005840">
    <property type="term" value="C:ribosome"/>
    <property type="evidence" value="ECO:0007669"/>
    <property type="project" value="UniProtKB-KW"/>
</dbReference>
<dbReference type="GO" id="GO:0019843">
    <property type="term" value="F:rRNA binding"/>
    <property type="evidence" value="ECO:0007669"/>
    <property type="project" value="UniProtKB-UniRule"/>
</dbReference>
<dbReference type="GO" id="GO:0003735">
    <property type="term" value="F:structural constituent of ribosome"/>
    <property type="evidence" value="ECO:0007669"/>
    <property type="project" value="InterPro"/>
</dbReference>
<dbReference type="GO" id="GO:0000027">
    <property type="term" value="P:ribosomal large subunit assembly"/>
    <property type="evidence" value="ECO:0007669"/>
    <property type="project" value="UniProtKB-UniRule"/>
</dbReference>
<dbReference type="GO" id="GO:0006412">
    <property type="term" value="P:translation"/>
    <property type="evidence" value="ECO:0007669"/>
    <property type="project" value="InterPro"/>
</dbReference>
<dbReference type="CDD" id="cd07026">
    <property type="entry name" value="Ribosomal_L20"/>
    <property type="match status" value="1"/>
</dbReference>
<dbReference type="FunFam" id="1.10.1900.20:FF:000001">
    <property type="entry name" value="50S ribosomal protein L20"/>
    <property type="match status" value="1"/>
</dbReference>
<dbReference type="Gene3D" id="6.10.160.10">
    <property type="match status" value="1"/>
</dbReference>
<dbReference type="Gene3D" id="1.10.1900.20">
    <property type="entry name" value="Ribosomal protein L20"/>
    <property type="match status" value="1"/>
</dbReference>
<dbReference type="HAMAP" id="MF_00382">
    <property type="entry name" value="Ribosomal_bL20"/>
    <property type="match status" value="1"/>
</dbReference>
<dbReference type="InterPro" id="IPR005813">
    <property type="entry name" value="Ribosomal_bL20"/>
</dbReference>
<dbReference type="InterPro" id="IPR049946">
    <property type="entry name" value="RIBOSOMAL_L20_CS"/>
</dbReference>
<dbReference type="InterPro" id="IPR035566">
    <property type="entry name" value="Ribosomal_protein_bL20_C"/>
</dbReference>
<dbReference type="NCBIfam" id="TIGR01032">
    <property type="entry name" value="rplT_bact"/>
    <property type="match status" value="1"/>
</dbReference>
<dbReference type="PANTHER" id="PTHR10986">
    <property type="entry name" value="39S RIBOSOMAL PROTEIN L20"/>
    <property type="match status" value="1"/>
</dbReference>
<dbReference type="Pfam" id="PF00453">
    <property type="entry name" value="Ribosomal_L20"/>
    <property type="match status" value="1"/>
</dbReference>
<dbReference type="PRINTS" id="PR00062">
    <property type="entry name" value="RIBOSOMALL20"/>
</dbReference>
<dbReference type="SUPFAM" id="SSF74731">
    <property type="entry name" value="Ribosomal protein L20"/>
    <property type="match status" value="1"/>
</dbReference>
<dbReference type="PROSITE" id="PS00937">
    <property type="entry name" value="RIBOSOMAL_L20"/>
    <property type="match status" value="1"/>
</dbReference>
<name>RL20_ALISL</name>
<reference key="1">
    <citation type="journal article" date="2008" name="BMC Genomics">
        <title>The genome sequence of the fish pathogen Aliivibrio salmonicida strain LFI1238 shows extensive evidence of gene decay.</title>
        <authorList>
            <person name="Hjerde E."/>
            <person name="Lorentzen M.S."/>
            <person name="Holden M.T."/>
            <person name="Seeger K."/>
            <person name="Paulsen S."/>
            <person name="Bason N."/>
            <person name="Churcher C."/>
            <person name="Harris D."/>
            <person name="Norbertczak H."/>
            <person name="Quail M.A."/>
            <person name="Sanders S."/>
            <person name="Thurston S."/>
            <person name="Parkhill J."/>
            <person name="Willassen N.P."/>
            <person name="Thomson N.R."/>
        </authorList>
    </citation>
    <scope>NUCLEOTIDE SEQUENCE [LARGE SCALE GENOMIC DNA]</scope>
    <source>
        <strain>LFI1238</strain>
    </source>
</reference>
<comment type="function">
    <text evidence="1">Binds directly to 23S ribosomal RNA and is necessary for the in vitro assembly process of the 50S ribosomal subunit. It is not involved in the protein synthesizing functions of that subunit.</text>
</comment>
<comment type="similarity">
    <text evidence="1">Belongs to the bacterial ribosomal protein bL20 family.</text>
</comment>
<accession>B6EN31</accession>
<sequence length="117" mass="13310">MPRVKRGVQARARHKKVLKQAKGYYGARSRVYRVAFQAVTKAGQYAYRDRRNKKRVFRQLWIARINAAARQNGLSYSRFINGLKKASIEIDRKILADIAVFDKVAFAALVAKANAAL</sequence>
<feature type="chain" id="PRO_1000122265" description="Large ribosomal subunit protein bL20">
    <location>
        <begin position="1"/>
        <end position="117"/>
    </location>
</feature>
<keyword id="KW-0687">Ribonucleoprotein</keyword>
<keyword id="KW-0689">Ribosomal protein</keyword>
<keyword id="KW-0694">RNA-binding</keyword>
<keyword id="KW-0699">rRNA-binding</keyword>
<gene>
    <name evidence="1" type="primary">rplT</name>
    <name type="ordered locus">VSAL_I1757</name>
</gene>
<organism>
    <name type="scientific">Aliivibrio salmonicida (strain LFI1238)</name>
    <name type="common">Vibrio salmonicida (strain LFI1238)</name>
    <dbReference type="NCBI Taxonomy" id="316275"/>
    <lineage>
        <taxon>Bacteria</taxon>
        <taxon>Pseudomonadati</taxon>
        <taxon>Pseudomonadota</taxon>
        <taxon>Gammaproteobacteria</taxon>
        <taxon>Vibrionales</taxon>
        <taxon>Vibrionaceae</taxon>
        <taxon>Aliivibrio</taxon>
    </lineage>
</organism>
<proteinExistence type="inferred from homology"/>